<dbReference type="EC" id="6.3.2.2" evidence="1"/>
<dbReference type="EMBL" id="CP000440">
    <property type="protein sequence ID" value="ABI85620.1"/>
    <property type="molecule type" value="Genomic_DNA"/>
</dbReference>
<dbReference type="RefSeq" id="WP_006751345.1">
    <property type="nucleotide sequence ID" value="NZ_CP009798.1"/>
</dbReference>
<dbReference type="SMR" id="Q0BJQ3"/>
<dbReference type="KEGG" id="bam:Bamb_0059"/>
<dbReference type="PATRIC" id="fig|339670.21.peg.1575"/>
<dbReference type="eggNOG" id="COG2170">
    <property type="taxonomic scope" value="Bacteria"/>
</dbReference>
<dbReference type="Proteomes" id="UP000000662">
    <property type="component" value="Chromosome 1"/>
</dbReference>
<dbReference type="GO" id="GO:0005524">
    <property type="term" value="F:ATP binding"/>
    <property type="evidence" value="ECO:0007669"/>
    <property type="project" value="UniProtKB-KW"/>
</dbReference>
<dbReference type="GO" id="GO:0004357">
    <property type="term" value="F:glutamate-cysteine ligase activity"/>
    <property type="evidence" value="ECO:0007669"/>
    <property type="project" value="UniProtKB-EC"/>
</dbReference>
<dbReference type="GO" id="GO:0042398">
    <property type="term" value="P:modified amino acid biosynthetic process"/>
    <property type="evidence" value="ECO:0007669"/>
    <property type="project" value="InterPro"/>
</dbReference>
<dbReference type="Gene3D" id="3.30.590.20">
    <property type="match status" value="1"/>
</dbReference>
<dbReference type="HAMAP" id="MF_01609">
    <property type="entry name" value="Glu_cys_ligase_2"/>
    <property type="match status" value="1"/>
</dbReference>
<dbReference type="InterPro" id="IPR050141">
    <property type="entry name" value="GCL_type2/YbdK_subfam"/>
</dbReference>
<dbReference type="InterPro" id="IPR006336">
    <property type="entry name" value="GCS2"/>
</dbReference>
<dbReference type="InterPro" id="IPR014746">
    <property type="entry name" value="Gln_synth/guanido_kin_cat_dom"/>
</dbReference>
<dbReference type="InterPro" id="IPR011793">
    <property type="entry name" value="YbdK"/>
</dbReference>
<dbReference type="NCBIfam" id="TIGR02050">
    <property type="entry name" value="gshA_cyan_rel"/>
    <property type="match status" value="1"/>
</dbReference>
<dbReference type="NCBIfam" id="NF010040">
    <property type="entry name" value="PRK13516.1"/>
    <property type="match status" value="1"/>
</dbReference>
<dbReference type="PANTHER" id="PTHR36510">
    <property type="entry name" value="GLUTAMATE--CYSTEINE LIGASE 2-RELATED"/>
    <property type="match status" value="1"/>
</dbReference>
<dbReference type="PANTHER" id="PTHR36510:SF1">
    <property type="entry name" value="GLUTAMATE--CYSTEINE LIGASE 2-RELATED"/>
    <property type="match status" value="1"/>
</dbReference>
<dbReference type="Pfam" id="PF04107">
    <property type="entry name" value="GCS2"/>
    <property type="match status" value="1"/>
</dbReference>
<dbReference type="SUPFAM" id="SSF55931">
    <property type="entry name" value="Glutamine synthetase/guanido kinase"/>
    <property type="match status" value="1"/>
</dbReference>
<keyword id="KW-0067">ATP-binding</keyword>
<keyword id="KW-0436">Ligase</keyword>
<keyword id="KW-0547">Nucleotide-binding</keyword>
<organism>
    <name type="scientific">Burkholderia ambifaria (strain ATCC BAA-244 / DSM 16087 / CCUG 44356 / LMG 19182 / AMMD)</name>
    <name type="common">Burkholderia cepacia (strain AMMD)</name>
    <dbReference type="NCBI Taxonomy" id="339670"/>
    <lineage>
        <taxon>Bacteria</taxon>
        <taxon>Pseudomonadati</taxon>
        <taxon>Pseudomonadota</taxon>
        <taxon>Betaproteobacteria</taxon>
        <taxon>Burkholderiales</taxon>
        <taxon>Burkholderiaceae</taxon>
        <taxon>Burkholderia</taxon>
        <taxon>Burkholderia cepacia complex</taxon>
    </lineage>
</organism>
<feature type="chain" id="PRO_0000291488" description="Putative glutamate--cysteine ligase 2">
    <location>
        <begin position="1"/>
        <end position="371"/>
    </location>
</feature>
<evidence type="ECO:0000255" key="1">
    <source>
        <dbReference type="HAMAP-Rule" id="MF_01609"/>
    </source>
</evidence>
<reference key="1">
    <citation type="submission" date="2006-08" db="EMBL/GenBank/DDBJ databases">
        <title>Complete sequence of chromosome 1 of Burkholderia cepacia AMMD.</title>
        <authorList>
            <person name="Copeland A."/>
            <person name="Lucas S."/>
            <person name="Lapidus A."/>
            <person name="Barry K."/>
            <person name="Detter J.C."/>
            <person name="Glavina del Rio T."/>
            <person name="Hammon N."/>
            <person name="Israni S."/>
            <person name="Pitluck S."/>
            <person name="Bruce D."/>
            <person name="Chain P."/>
            <person name="Malfatti S."/>
            <person name="Shin M."/>
            <person name="Vergez L."/>
            <person name="Schmutz J."/>
            <person name="Larimer F."/>
            <person name="Land M."/>
            <person name="Hauser L."/>
            <person name="Kyrpides N."/>
            <person name="Kim E."/>
            <person name="Parke J."/>
            <person name="Coenye T."/>
            <person name="Konstantinidis K."/>
            <person name="Ramette A."/>
            <person name="Tiedje J."/>
            <person name="Richardson P."/>
        </authorList>
    </citation>
    <scope>NUCLEOTIDE SEQUENCE [LARGE SCALE GENOMIC DNA]</scope>
    <source>
        <strain>ATCC BAA-244 / DSM 16087 / CCUG 44356 / LMG 19182 / AMMD</strain>
    </source>
</reference>
<comment type="function">
    <text evidence="1">ATP-dependent carboxylate-amine ligase which exhibits weak glutamate--cysteine ligase activity.</text>
</comment>
<comment type="catalytic activity">
    <reaction evidence="1">
        <text>L-cysteine + L-glutamate + ATP = gamma-L-glutamyl-L-cysteine + ADP + phosphate + H(+)</text>
        <dbReference type="Rhea" id="RHEA:13285"/>
        <dbReference type="ChEBI" id="CHEBI:15378"/>
        <dbReference type="ChEBI" id="CHEBI:29985"/>
        <dbReference type="ChEBI" id="CHEBI:30616"/>
        <dbReference type="ChEBI" id="CHEBI:35235"/>
        <dbReference type="ChEBI" id="CHEBI:43474"/>
        <dbReference type="ChEBI" id="CHEBI:58173"/>
        <dbReference type="ChEBI" id="CHEBI:456216"/>
        <dbReference type="EC" id="6.3.2.2"/>
    </reaction>
</comment>
<comment type="similarity">
    <text evidence="1">Belongs to the glutamate--cysteine ligase type 2 family. YbdK subfamily.</text>
</comment>
<name>GCS2_BURCM</name>
<protein>
    <recommendedName>
        <fullName evidence="1">Putative glutamate--cysteine ligase 2</fullName>
        <ecNumber evidence="1">6.3.2.2</ecNumber>
    </recommendedName>
    <alternativeName>
        <fullName evidence="1">Gamma-glutamylcysteine synthetase 2</fullName>
        <shortName evidence="1">GCS 2</shortName>
        <shortName evidence="1">Gamma-GCS 2</shortName>
    </alternativeName>
</protein>
<gene>
    <name type="ordered locus">Bamb_0059</name>
</gene>
<accession>Q0BJQ3</accession>
<sequence>MALETFVNSEPFTFGVELEIQVVNTHNYDLTKAASDLMRLIQGETFPGNITPEITESMIELSTGICHSHEQAVSELHAIRDVLVKAADQLNVGLCGGGTHAFQQWSDRQIYDAPRFQYISELYGYLAKQFTVFGQHVHIGCPDPDSALFLLHSMSRFIPHFIALSASSPFVQNVDTGFHSARLNSVFAFPLSGRAPFVLTWDSFEEYFTKMVNTGVVNSMKDFYWDIRPKPGYGTIEVRVMDTPLSVDRAAAIACYIQTLARYLLTDRPLKLSEDDYLVYTFNRFEACRFGLEGTCVNPQTGERRTIAEDILDTLDRIAPHAAALGSRAALDEIGALAKARVNDASWLRTVFKQEKSLNETVRQQCLRWRE</sequence>
<proteinExistence type="inferred from homology"/>